<evidence type="ECO:0000255" key="1">
    <source>
        <dbReference type="HAMAP-Rule" id="MF_01365"/>
    </source>
</evidence>
<evidence type="ECO:0000305" key="2"/>
<sequence>MSRIGLKPIEVPQGVEITVDEKNIVTVKGPNGQLSEKIHRDITVETEANVINVVRPTENKKHKSLHGLSRTLVANMVEGVTKGYEKKLELVGVGYRATMQGKKLVLSLGFSHPVEIDQPEGLTIEVPSQTQVTVKGIDKQQVGNFAAKIREYRKPEPYKGKGVRYAGEVVRRKEGKTGK</sequence>
<feature type="chain" id="PRO_1000067974" description="Large ribosomal subunit protein uL6">
    <location>
        <begin position="1"/>
        <end position="179"/>
    </location>
</feature>
<comment type="function">
    <text evidence="1">This protein binds to the 23S rRNA, and is important in its secondary structure. It is located near the subunit interface in the base of the L7/L12 stalk, and near the tRNA binding site of the peptidyltransferase center.</text>
</comment>
<comment type="subunit">
    <text evidence="1">Part of the 50S ribosomal subunit.</text>
</comment>
<comment type="similarity">
    <text evidence="1">Belongs to the universal ribosomal protein uL6 family.</text>
</comment>
<proteinExistence type="inferred from homology"/>
<protein>
    <recommendedName>
        <fullName evidence="1">Large ribosomal subunit protein uL6</fullName>
    </recommendedName>
    <alternativeName>
        <fullName evidence="2">50S ribosomal protein L6</fullName>
    </alternativeName>
</protein>
<organism>
    <name type="scientific">Alkaliphilus metalliredigens (strain QYMF)</name>
    <dbReference type="NCBI Taxonomy" id="293826"/>
    <lineage>
        <taxon>Bacteria</taxon>
        <taxon>Bacillati</taxon>
        <taxon>Bacillota</taxon>
        <taxon>Clostridia</taxon>
        <taxon>Peptostreptococcales</taxon>
        <taxon>Natronincolaceae</taxon>
        <taxon>Alkaliphilus</taxon>
    </lineage>
</organism>
<reference key="1">
    <citation type="journal article" date="2016" name="Genome Announc.">
        <title>Complete genome sequence of Alkaliphilus metalliredigens strain QYMF, an alkaliphilic and metal-reducing bacterium isolated from borax-contaminated leachate ponds.</title>
        <authorList>
            <person name="Hwang C."/>
            <person name="Copeland A."/>
            <person name="Lucas S."/>
            <person name="Lapidus A."/>
            <person name="Barry K."/>
            <person name="Detter J.C."/>
            <person name="Glavina Del Rio T."/>
            <person name="Hammon N."/>
            <person name="Israni S."/>
            <person name="Dalin E."/>
            <person name="Tice H."/>
            <person name="Pitluck S."/>
            <person name="Chertkov O."/>
            <person name="Brettin T."/>
            <person name="Bruce D."/>
            <person name="Han C."/>
            <person name="Schmutz J."/>
            <person name="Larimer F."/>
            <person name="Land M.L."/>
            <person name="Hauser L."/>
            <person name="Kyrpides N."/>
            <person name="Mikhailova N."/>
            <person name="Ye Q."/>
            <person name="Zhou J."/>
            <person name="Richardson P."/>
            <person name="Fields M.W."/>
        </authorList>
    </citation>
    <scope>NUCLEOTIDE SEQUENCE [LARGE SCALE GENOMIC DNA]</scope>
    <source>
        <strain>QYMF</strain>
    </source>
</reference>
<name>RL6_ALKMQ</name>
<gene>
    <name evidence="1" type="primary">rplF</name>
    <name type="ordered locus">Amet_4463</name>
</gene>
<accession>A6TWG7</accession>
<dbReference type="EMBL" id="CP000724">
    <property type="protein sequence ID" value="ABR50535.1"/>
    <property type="molecule type" value="Genomic_DNA"/>
</dbReference>
<dbReference type="RefSeq" id="WP_012065426.1">
    <property type="nucleotide sequence ID" value="NC_009633.1"/>
</dbReference>
<dbReference type="SMR" id="A6TWG7"/>
<dbReference type="STRING" id="293826.Amet_4463"/>
<dbReference type="KEGG" id="amt:Amet_4463"/>
<dbReference type="eggNOG" id="COG0097">
    <property type="taxonomic scope" value="Bacteria"/>
</dbReference>
<dbReference type="HOGENOM" id="CLU_065464_1_2_9"/>
<dbReference type="OrthoDB" id="9805007at2"/>
<dbReference type="Proteomes" id="UP000001572">
    <property type="component" value="Chromosome"/>
</dbReference>
<dbReference type="GO" id="GO:0022625">
    <property type="term" value="C:cytosolic large ribosomal subunit"/>
    <property type="evidence" value="ECO:0007669"/>
    <property type="project" value="TreeGrafter"/>
</dbReference>
<dbReference type="GO" id="GO:0019843">
    <property type="term" value="F:rRNA binding"/>
    <property type="evidence" value="ECO:0007669"/>
    <property type="project" value="UniProtKB-UniRule"/>
</dbReference>
<dbReference type="GO" id="GO:0003735">
    <property type="term" value="F:structural constituent of ribosome"/>
    <property type="evidence" value="ECO:0007669"/>
    <property type="project" value="InterPro"/>
</dbReference>
<dbReference type="GO" id="GO:0002181">
    <property type="term" value="P:cytoplasmic translation"/>
    <property type="evidence" value="ECO:0007669"/>
    <property type="project" value="TreeGrafter"/>
</dbReference>
<dbReference type="FunFam" id="3.90.930.12:FF:000001">
    <property type="entry name" value="50S ribosomal protein L6"/>
    <property type="match status" value="1"/>
</dbReference>
<dbReference type="FunFam" id="3.90.930.12:FF:000002">
    <property type="entry name" value="50S ribosomal protein L6"/>
    <property type="match status" value="1"/>
</dbReference>
<dbReference type="Gene3D" id="3.90.930.12">
    <property type="entry name" value="Ribosomal protein L6, alpha-beta domain"/>
    <property type="match status" value="2"/>
</dbReference>
<dbReference type="HAMAP" id="MF_01365_B">
    <property type="entry name" value="Ribosomal_uL6_B"/>
    <property type="match status" value="1"/>
</dbReference>
<dbReference type="InterPro" id="IPR000702">
    <property type="entry name" value="Ribosomal_uL6-like"/>
</dbReference>
<dbReference type="InterPro" id="IPR036789">
    <property type="entry name" value="Ribosomal_uL6-like_a/b-dom_sf"/>
</dbReference>
<dbReference type="InterPro" id="IPR020040">
    <property type="entry name" value="Ribosomal_uL6_a/b-dom"/>
</dbReference>
<dbReference type="InterPro" id="IPR019906">
    <property type="entry name" value="Ribosomal_uL6_bac-type"/>
</dbReference>
<dbReference type="InterPro" id="IPR002358">
    <property type="entry name" value="Ribosomal_uL6_CS"/>
</dbReference>
<dbReference type="NCBIfam" id="TIGR03654">
    <property type="entry name" value="L6_bact"/>
    <property type="match status" value="1"/>
</dbReference>
<dbReference type="PANTHER" id="PTHR11655">
    <property type="entry name" value="60S/50S RIBOSOMAL PROTEIN L6/L9"/>
    <property type="match status" value="1"/>
</dbReference>
<dbReference type="PANTHER" id="PTHR11655:SF14">
    <property type="entry name" value="LARGE RIBOSOMAL SUBUNIT PROTEIN UL6M"/>
    <property type="match status" value="1"/>
</dbReference>
<dbReference type="Pfam" id="PF00347">
    <property type="entry name" value="Ribosomal_L6"/>
    <property type="match status" value="2"/>
</dbReference>
<dbReference type="PIRSF" id="PIRSF002162">
    <property type="entry name" value="Ribosomal_L6"/>
    <property type="match status" value="1"/>
</dbReference>
<dbReference type="PRINTS" id="PR00059">
    <property type="entry name" value="RIBOSOMALL6"/>
</dbReference>
<dbReference type="SUPFAM" id="SSF56053">
    <property type="entry name" value="Ribosomal protein L6"/>
    <property type="match status" value="2"/>
</dbReference>
<dbReference type="PROSITE" id="PS00525">
    <property type="entry name" value="RIBOSOMAL_L6_1"/>
    <property type="match status" value="1"/>
</dbReference>
<keyword id="KW-1185">Reference proteome</keyword>
<keyword id="KW-0687">Ribonucleoprotein</keyword>
<keyword id="KW-0689">Ribosomal protein</keyword>
<keyword id="KW-0694">RNA-binding</keyword>
<keyword id="KW-0699">rRNA-binding</keyword>